<reference key="1">
    <citation type="journal article" date="2008" name="J. Bacteriol.">
        <title>Complete genome sequence of uropathogenic Proteus mirabilis, a master of both adherence and motility.</title>
        <authorList>
            <person name="Pearson M.M."/>
            <person name="Sebaihia M."/>
            <person name="Churcher C."/>
            <person name="Quail M.A."/>
            <person name="Seshasayee A.S."/>
            <person name="Luscombe N.M."/>
            <person name="Abdellah Z."/>
            <person name="Arrosmith C."/>
            <person name="Atkin B."/>
            <person name="Chillingworth T."/>
            <person name="Hauser H."/>
            <person name="Jagels K."/>
            <person name="Moule S."/>
            <person name="Mungall K."/>
            <person name="Norbertczak H."/>
            <person name="Rabbinowitsch E."/>
            <person name="Walker D."/>
            <person name="Whithead S."/>
            <person name="Thomson N.R."/>
            <person name="Rather P.N."/>
            <person name="Parkhill J."/>
            <person name="Mobley H.L.T."/>
        </authorList>
    </citation>
    <scope>NUCLEOTIDE SEQUENCE [LARGE SCALE GENOMIC DNA]</scope>
    <source>
        <strain>HI4320</strain>
    </source>
</reference>
<organism>
    <name type="scientific">Proteus mirabilis (strain HI4320)</name>
    <dbReference type="NCBI Taxonomy" id="529507"/>
    <lineage>
        <taxon>Bacteria</taxon>
        <taxon>Pseudomonadati</taxon>
        <taxon>Pseudomonadota</taxon>
        <taxon>Gammaproteobacteria</taxon>
        <taxon>Enterobacterales</taxon>
        <taxon>Morganellaceae</taxon>
        <taxon>Proteus</taxon>
    </lineage>
</organism>
<dbReference type="EC" id="1.2.1.72" evidence="1"/>
<dbReference type="EMBL" id="AM942759">
    <property type="protein sequence ID" value="CAR40679.1"/>
    <property type="molecule type" value="Genomic_DNA"/>
</dbReference>
<dbReference type="RefSeq" id="WP_004244954.1">
    <property type="nucleotide sequence ID" value="NC_010554.1"/>
</dbReference>
<dbReference type="SMR" id="B4EUH7"/>
<dbReference type="EnsemblBacteria" id="CAR40679">
    <property type="protein sequence ID" value="CAR40679"/>
    <property type="gene ID" value="PMI0241"/>
</dbReference>
<dbReference type="GeneID" id="6803368"/>
<dbReference type="KEGG" id="pmr:PMI0241"/>
<dbReference type="eggNOG" id="COG0057">
    <property type="taxonomic scope" value="Bacteria"/>
</dbReference>
<dbReference type="HOGENOM" id="CLU_030140_0_0_6"/>
<dbReference type="UniPathway" id="UPA00244">
    <property type="reaction ID" value="UER00309"/>
</dbReference>
<dbReference type="Proteomes" id="UP000008319">
    <property type="component" value="Chromosome"/>
</dbReference>
<dbReference type="GO" id="GO:0005737">
    <property type="term" value="C:cytoplasm"/>
    <property type="evidence" value="ECO:0007669"/>
    <property type="project" value="UniProtKB-SubCell"/>
</dbReference>
<dbReference type="GO" id="GO:0048001">
    <property type="term" value="F:erythrose-4-phosphate dehydrogenase activity"/>
    <property type="evidence" value="ECO:0007669"/>
    <property type="project" value="UniProtKB-UniRule"/>
</dbReference>
<dbReference type="GO" id="GO:0051287">
    <property type="term" value="F:NAD binding"/>
    <property type="evidence" value="ECO:0007669"/>
    <property type="project" value="InterPro"/>
</dbReference>
<dbReference type="GO" id="GO:0042823">
    <property type="term" value="P:pyridoxal phosphate biosynthetic process"/>
    <property type="evidence" value="ECO:0007669"/>
    <property type="project" value="UniProtKB-UniRule"/>
</dbReference>
<dbReference type="GO" id="GO:0008615">
    <property type="term" value="P:pyridoxine biosynthetic process"/>
    <property type="evidence" value="ECO:0007669"/>
    <property type="project" value="UniProtKB-UniRule"/>
</dbReference>
<dbReference type="CDD" id="cd23937">
    <property type="entry name" value="GAPDH_C_E4PDH"/>
    <property type="match status" value="1"/>
</dbReference>
<dbReference type="CDD" id="cd17892">
    <property type="entry name" value="GAPDH_N_E4PDH"/>
    <property type="match status" value="1"/>
</dbReference>
<dbReference type="FunFam" id="3.30.360.10:FF:000007">
    <property type="entry name" value="D-erythrose-4-phosphate dehydrogenase"/>
    <property type="match status" value="1"/>
</dbReference>
<dbReference type="FunFam" id="3.40.50.720:FF:000001">
    <property type="entry name" value="Glyceraldehyde-3-phosphate dehydrogenase"/>
    <property type="match status" value="1"/>
</dbReference>
<dbReference type="Gene3D" id="3.30.360.10">
    <property type="entry name" value="Dihydrodipicolinate Reductase, domain 2"/>
    <property type="match status" value="1"/>
</dbReference>
<dbReference type="Gene3D" id="3.40.50.720">
    <property type="entry name" value="NAD(P)-binding Rossmann-like Domain"/>
    <property type="match status" value="1"/>
</dbReference>
<dbReference type="HAMAP" id="MF_01640">
    <property type="entry name" value="E4P_dehydrog"/>
    <property type="match status" value="1"/>
</dbReference>
<dbReference type="InterPro" id="IPR006422">
    <property type="entry name" value="E4P_DH_bac"/>
</dbReference>
<dbReference type="InterPro" id="IPR020831">
    <property type="entry name" value="GlycerAld/Erythrose_P_DH"/>
</dbReference>
<dbReference type="InterPro" id="IPR020830">
    <property type="entry name" value="GlycerAld_3-P_DH_AS"/>
</dbReference>
<dbReference type="InterPro" id="IPR020829">
    <property type="entry name" value="GlycerAld_3-P_DH_cat"/>
</dbReference>
<dbReference type="InterPro" id="IPR020828">
    <property type="entry name" value="GlycerAld_3-P_DH_NAD(P)-bd"/>
</dbReference>
<dbReference type="InterPro" id="IPR036291">
    <property type="entry name" value="NAD(P)-bd_dom_sf"/>
</dbReference>
<dbReference type="NCBIfam" id="TIGR01532">
    <property type="entry name" value="E4PD_g-proteo"/>
    <property type="match status" value="1"/>
</dbReference>
<dbReference type="NCBIfam" id="NF010058">
    <property type="entry name" value="PRK13535.1"/>
    <property type="match status" value="1"/>
</dbReference>
<dbReference type="PANTHER" id="PTHR43148">
    <property type="entry name" value="GLYCERALDEHYDE-3-PHOSPHATE DEHYDROGENASE 2"/>
    <property type="match status" value="1"/>
</dbReference>
<dbReference type="Pfam" id="PF02800">
    <property type="entry name" value="Gp_dh_C"/>
    <property type="match status" value="1"/>
</dbReference>
<dbReference type="Pfam" id="PF00044">
    <property type="entry name" value="Gp_dh_N"/>
    <property type="match status" value="1"/>
</dbReference>
<dbReference type="PIRSF" id="PIRSF000149">
    <property type="entry name" value="GAP_DH"/>
    <property type="match status" value="1"/>
</dbReference>
<dbReference type="PRINTS" id="PR00078">
    <property type="entry name" value="G3PDHDRGNASE"/>
</dbReference>
<dbReference type="SMART" id="SM00846">
    <property type="entry name" value="Gp_dh_N"/>
    <property type="match status" value="1"/>
</dbReference>
<dbReference type="SUPFAM" id="SSF55347">
    <property type="entry name" value="Glyceraldehyde-3-phosphate dehydrogenase-like, C-terminal domain"/>
    <property type="match status" value="1"/>
</dbReference>
<dbReference type="SUPFAM" id="SSF51735">
    <property type="entry name" value="NAD(P)-binding Rossmann-fold domains"/>
    <property type="match status" value="1"/>
</dbReference>
<dbReference type="PROSITE" id="PS00071">
    <property type="entry name" value="GAPDH"/>
    <property type="match status" value="1"/>
</dbReference>
<proteinExistence type="inferred from homology"/>
<accession>B4EUH7</accession>
<evidence type="ECO:0000255" key="1">
    <source>
        <dbReference type="HAMAP-Rule" id="MF_01640"/>
    </source>
</evidence>
<name>E4PD_PROMH</name>
<protein>
    <recommendedName>
        <fullName evidence="1">D-erythrose-4-phosphate dehydrogenase</fullName>
        <shortName evidence="1">E4PDH</shortName>
        <ecNumber evidence="1">1.2.1.72</ecNumber>
    </recommendedName>
</protein>
<feature type="chain" id="PRO_1000186831" description="D-erythrose-4-phosphate dehydrogenase">
    <location>
        <begin position="1"/>
        <end position="339"/>
    </location>
</feature>
<feature type="active site" description="Nucleophile" evidence="1">
    <location>
        <position position="155"/>
    </location>
</feature>
<feature type="binding site" evidence="1">
    <location>
        <begin position="12"/>
        <end position="13"/>
    </location>
    <ligand>
        <name>NAD(+)</name>
        <dbReference type="ChEBI" id="CHEBI:57540"/>
    </ligand>
</feature>
<feature type="binding site" evidence="1">
    <location>
        <begin position="154"/>
        <end position="156"/>
    </location>
    <ligand>
        <name>substrate</name>
    </ligand>
</feature>
<feature type="binding site" evidence="1">
    <location>
        <position position="200"/>
    </location>
    <ligand>
        <name>substrate</name>
    </ligand>
</feature>
<feature type="binding site" evidence="1">
    <location>
        <begin position="213"/>
        <end position="214"/>
    </location>
    <ligand>
        <name>substrate</name>
    </ligand>
</feature>
<feature type="binding site" evidence="1">
    <location>
        <position position="236"/>
    </location>
    <ligand>
        <name>substrate</name>
    </ligand>
</feature>
<feature type="binding site" evidence="1">
    <location>
        <position position="318"/>
    </location>
    <ligand>
        <name>NAD(+)</name>
        <dbReference type="ChEBI" id="CHEBI:57540"/>
    </ligand>
</feature>
<feature type="site" description="Activates thiol group during catalysis" evidence="1">
    <location>
        <position position="182"/>
    </location>
</feature>
<keyword id="KW-0963">Cytoplasm</keyword>
<keyword id="KW-0520">NAD</keyword>
<keyword id="KW-0560">Oxidoreductase</keyword>
<keyword id="KW-0664">Pyridoxine biosynthesis</keyword>
<keyword id="KW-1185">Reference proteome</keyword>
<comment type="function">
    <text evidence="1">Catalyzes the NAD-dependent conversion of D-erythrose 4-phosphate to 4-phosphoerythronate.</text>
</comment>
<comment type="catalytic activity">
    <reaction evidence="1">
        <text>D-erythrose 4-phosphate + NAD(+) + H2O = 4-phospho-D-erythronate + NADH + 2 H(+)</text>
        <dbReference type="Rhea" id="RHEA:12056"/>
        <dbReference type="ChEBI" id="CHEBI:15377"/>
        <dbReference type="ChEBI" id="CHEBI:15378"/>
        <dbReference type="ChEBI" id="CHEBI:16897"/>
        <dbReference type="ChEBI" id="CHEBI:57540"/>
        <dbReference type="ChEBI" id="CHEBI:57945"/>
        <dbReference type="ChEBI" id="CHEBI:58766"/>
        <dbReference type="EC" id="1.2.1.72"/>
    </reaction>
</comment>
<comment type="pathway">
    <text evidence="1">Cofactor biosynthesis; pyridoxine 5'-phosphate biosynthesis; pyridoxine 5'-phosphate from D-erythrose 4-phosphate: step 1/5.</text>
</comment>
<comment type="subunit">
    <text evidence="1">Homotetramer.</text>
</comment>
<comment type="subcellular location">
    <subcellularLocation>
        <location evidence="1">Cytoplasm</location>
    </subcellularLocation>
</comment>
<comment type="similarity">
    <text evidence="1">Belongs to the glyceraldehyde-3-phosphate dehydrogenase family. Epd subfamily.</text>
</comment>
<sequence>MTIRVAINGFGRIGRNVLRALYESGKRAEISVVAINELADATGIAHLLKYDSSHGRFAWDIRVNNDLLQVGDDAIRLFHHADIADLPWGELGIDVVLDCSGVYGSRADGEAHIAQGAKKVLFSHPGTIDLDATVVFGVNQHELKKQHRIVSNASCTTNCIIPIIKMMDDAFGIESGTVTTIHAAMNDQPVIDAYHKDLRRTRAAGQSIIPVDTKLAAGITRIFPKFKDHFEAISVRVPTINVTAIDLSVTVKNAVNVLDVNKLIQKSATGAFRGIVDYTELPLVSTDFNHDPHSAIVDGTQTRVSGQHLIKTLVWCDNEWGFANRMLDTTLAMAATGFK</sequence>
<gene>
    <name evidence="1" type="primary">epd</name>
    <name type="ordered locus">PMI0241</name>
</gene>